<name>RECA_NITWN</name>
<sequence length="362" mass="38773">MSQAALRIVEGSSMDKSKALSAALSQIERQFGKGSVMKLGKNDKSMDVEVISSGSLGLDIALGVGGLPKGRIVEVYGPESSGKTTLALHAVAEAQKKGGICAFIDAEHALDPVYARKLGVNVDDLLISQPDHGEQALEIADTLVRSGAVDVLIIDSVAALVPRAELEGEMGDALPGLQARLMSQALRKLTASINKSNTMVIFINQIRMKIGVMYGSPETTTGGNALKFYASVRLDIRRIGAIKERDEVVGNQTRVKVVKNKLAPPFKQVEFDIMYGEGISKMGEILDLGVKAGIVEKSGAWFSYDSQRMGQGRENAKAFLRANPDITAKVEMAIRQNSGLIAEQILAGSPERETDDDETAED</sequence>
<organism>
    <name type="scientific">Nitrobacter winogradskyi (strain ATCC 25391 / DSM 10237 / CIP 104748 / NCIMB 11846 / Nb-255)</name>
    <dbReference type="NCBI Taxonomy" id="323098"/>
    <lineage>
        <taxon>Bacteria</taxon>
        <taxon>Pseudomonadati</taxon>
        <taxon>Pseudomonadota</taxon>
        <taxon>Alphaproteobacteria</taxon>
        <taxon>Hyphomicrobiales</taxon>
        <taxon>Nitrobacteraceae</taxon>
        <taxon>Nitrobacter</taxon>
    </lineage>
</organism>
<accession>Q3ST50</accession>
<keyword id="KW-0067">ATP-binding</keyword>
<keyword id="KW-0963">Cytoplasm</keyword>
<keyword id="KW-0227">DNA damage</keyword>
<keyword id="KW-0233">DNA recombination</keyword>
<keyword id="KW-0234">DNA repair</keyword>
<keyword id="KW-0238">DNA-binding</keyword>
<keyword id="KW-0547">Nucleotide-binding</keyword>
<keyword id="KW-1185">Reference proteome</keyword>
<keyword id="KW-0742">SOS response</keyword>
<reference key="1">
    <citation type="journal article" date="2006" name="Appl. Environ. Microbiol.">
        <title>Genome sequence of the chemolithoautotrophic nitrite-oxidizing bacterium Nitrobacter winogradskyi Nb-255.</title>
        <authorList>
            <person name="Starkenburg S.R."/>
            <person name="Chain P.S.G."/>
            <person name="Sayavedra-Soto L.A."/>
            <person name="Hauser L."/>
            <person name="Land M.L."/>
            <person name="Larimer F.W."/>
            <person name="Malfatti S.A."/>
            <person name="Klotz M.G."/>
            <person name="Bottomley P.J."/>
            <person name="Arp D.J."/>
            <person name="Hickey W.J."/>
        </authorList>
    </citation>
    <scope>NUCLEOTIDE SEQUENCE [LARGE SCALE GENOMIC DNA]</scope>
    <source>
        <strain>ATCC 25391 / DSM 10237 / CIP 104748 / NCIMB 11846 / Nb-255</strain>
    </source>
</reference>
<dbReference type="EMBL" id="CP000115">
    <property type="protein sequence ID" value="ABA04541.1"/>
    <property type="molecule type" value="Genomic_DNA"/>
</dbReference>
<dbReference type="RefSeq" id="WP_011314569.1">
    <property type="nucleotide sequence ID" value="NC_007406.1"/>
</dbReference>
<dbReference type="SMR" id="Q3ST50"/>
<dbReference type="STRING" id="323098.Nwi_1280"/>
<dbReference type="KEGG" id="nwi:Nwi_1280"/>
<dbReference type="eggNOG" id="COG0468">
    <property type="taxonomic scope" value="Bacteria"/>
</dbReference>
<dbReference type="HOGENOM" id="CLU_040469_1_2_5"/>
<dbReference type="OrthoDB" id="9776733at2"/>
<dbReference type="Proteomes" id="UP000002531">
    <property type="component" value="Chromosome"/>
</dbReference>
<dbReference type="GO" id="GO:0005829">
    <property type="term" value="C:cytosol"/>
    <property type="evidence" value="ECO:0007669"/>
    <property type="project" value="TreeGrafter"/>
</dbReference>
<dbReference type="GO" id="GO:0005524">
    <property type="term" value="F:ATP binding"/>
    <property type="evidence" value="ECO:0007669"/>
    <property type="project" value="UniProtKB-UniRule"/>
</dbReference>
<dbReference type="GO" id="GO:0016887">
    <property type="term" value="F:ATP hydrolysis activity"/>
    <property type="evidence" value="ECO:0007669"/>
    <property type="project" value="InterPro"/>
</dbReference>
<dbReference type="GO" id="GO:0140664">
    <property type="term" value="F:ATP-dependent DNA damage sensor activity"/>
    <property type="evidence" value="ECO:0007669"/>
    <property type="project" value="InterPro"/>
</dbReference>
<dbReference type="GO" id="GO:0003684">
    <property type="term" value="F:damaged DNA binding"/>
    <property type="evidence" value="ECO:0007669"/>
    <property type="project" value="UniProtKB-UniRule"/>
</dbReference>
<dbReference type="GO" id="GO:0003697">
    <property type="term" value="F:single-stranded DNA binding"/>
    <property type="evidence" value="ECO:0007669"/>
    <property type="project" value="UniProtKB-UniRule"/>
</dbReference>
<dbReference type="GO" id="GO:0006310">
    <property type="term" value="P:DNA recombination"/>
    <property type="evidence" value="ECO:0007669"/>
    <property type="project" value="UniProtKB-UniRule"/>
</dbReference>
<dbReference type="GO" id="GO:0006281">
    <property type="term" value="P:DNA repair"/>
    <property type="evidence" value="ECO:0007669"/>
    <property type="project" value="UniProtKB-UniRule"/>
</dbReference>
<dbReference type="GO" id="GO:0009432">
    <property type="term" value="P:SOS response"/>
    <property type="evidence" value="ECO:0007669"/>
    <property type="project" value="UniProtKB-UniRule"/>
</dbReference>
<dbReference type="CDD" id="cd00983">
    <property type="entry name" value="RecA"/>
    <property type="match status" value="1"/>
</dbReference>
<dbReference type="FunFam" id="3.40.50.300:FF:000087">
    <property type="entry name" value="Recombinase RecA"/>
    <property type="match status" value="1"/>
</dbReference>
<dbReference type="Gene3D" id="3.40.50.300">
    <property type="entry name" value="P-loop containing nucleotide triphosphate hydrolases"/>
    <property type="match status" value="1"/>
</dbReference>
<dbReference type="HAMAP" id="MF_00268">
    <property type="entry name" value="RecA"/>
    <property type="match status" value="1"/>
</dbReference>
<dbReference type="InterPro" id="IPR003593">
    <property type="entry name" value="AAA+_ATPase"/>
</dbReference>
<dbReference type="InterPro" id="IPR013765">
    <property type="entry name" value="DNA_recomb/repair_RecA"/>
</dbReference>
<dbReference type="InterPro" id="IPR020584">
    <property type="entry name" value="DNA_recomb/repair_RecA_CS"/>
</dbReference>
<dbReference type="InterPro" id="IPR027417">
    <property type="entry name" value="P-loop_NTPase"/>
</dbReference>
<dbReference type="InterPro" id="IPR049261">
    <property type="entry name" value="RecA-like_C"/>
</dbReference>
<dbReference type="InterPro" id="IPR049428">
    <property type="entry name" value="RecA-like_N"/>
</dbReference>
<dbReference type="InterPro" id="IPR020588">
    <property type="entry name" value="RecA_ATP-bd"/>
</dbReference>
<dbReference type="InterPro" id="IPR023400">
    <property type="entry name" value="RecA_C_sf"/>
</dbReference>
<dbReference type="InterPro" id="IPR020587">
    <property type="entry name" value="RecA_monomer-monomer_interface"/>
</dbReference>
<dbReference type="NCBIfam" id="TIGR02012">
    <property type="entry name" value="tigrfam_recA"/>
    <property type="match status" value="1"/>
</dbReference>
<dbReference type="PANTHER" id="PTHR45900:SF1">
    <property type="entry name" value="MITOCHONDRIAL DNA REPAIR PROTEIN RECA HOMOLOG-RELATED"/>
    <property type="match status" value="1"/>
</dbReference>
<dbReference type="PANTHER" id="PTHR45900">
    <property type="entry name" value="RECA"/>
    <property type="match status" value="1"/>
</dbReference>
<dbReference type="Pfam" id="PF00154">
    <property type="entry name" value="RecA"/>
    <property type="match status" value="1"/>
</dbReference>
<dbReference type="Pfam" id="PF21096">
    <property type="entry name" value="RecA_C"/>
    <property type="match status" value="1"/>
</dbReference>
<dbReference type="PRINTS" id="PR00142">
    <property type="entry name" value="RECA"/>
</dbReference>
<dbReference type="SMART" id="SM00382">
    <property type="entry name" value="AAA"/>
    <property type="match status" value="1"/>
</dbReference>
<dbReference type="SUPFAM" id="SSF52540">
    <property type="entry name" value="P-loop containing nucleoside triphosphate hydrolases"/>
    <property type="match status" value="1"/>
</dbReference>
<dbReference type="SUPFAM" id="SSF54752">
    <property type="entry name" value="RecA protein, C-terminal domain"/>
    <property type="match status" value="1"/>
</dbReference>
<dbReference type="PROSITE" id="PS00321">
    <property type="entry name" value="RECA_1"/>
    <property type="match status" value="1"/>
</dbReference>
<dbReference type="PROSITE" id="PS50162">
    <property type="entry name" value="RECA_2"/>
    <property type="match status" value="1"/>
</dbReference>
<dbReference type="PROSITE" id="PS50163">
    <property type="entry name" value="RECA_3"/>
    <property type="match status" value="1"/>
</dbReference>
<feature type="chain" id="PRO_1000047955" description="Protein RecA">
    <location>
        <begin position="1"/>
        <end position="362"/>
    </location>
</feature>
<feature type="binding site" evidence="1">
    <location>
        <begin position="77"/>
        <end position="84"/>
    </location>
    <ligand>
        <name>ATP</name>
        <dbReference type="ChEBI" id="CHEBI:30616"/>
    </ligand>
</feature>
<evidence type="ECO:0000255" key="1">
    <source>
        <dbReference type="HAMAP-Rule" id="MF_00268"/>
    </source>
</evidence>
<proteinExistence type="inferred from homology"/>
<gene>
    <name evidence="1" type="primary">recA</name>
    <name type="ordered locus">Nwi_1280</name>
</gene>
<protein>
    <recommendedName>
        <fullName evidence="1">Protein RecA</fullName>
    </recommendedName>
    <alternativeName>
        <fullName evidence="1">Recombinase A</fullName>
    </alternativeName>
</protein>
<comment type="function">
    <text evidence="1">Can catalyze the hydrolysis of ATP in the presence of single-stranded DNA, the ATP-dependent uptake of single-stranded DNA by duplex DNA, and the ATP-dependent hybridization of homologous single-stranded DNAs. It interacts with LexA causing its activation and leading to its autocatalytic cleavage.</text>
</comment>
<comment type="subcellular location">
    <subcellularLocation>
        <location evidence="1">Cytoplasm</location>
    </subcellularLocation>
</comment>
<comment type="similarity">
    <text evidence="1">Belongs to the RecA family.</text>
</comment>